<sequence>MDLHELERLRAENEQLKAELASKQHQIKQNDIKSYKGLSFEEHRRYGRQMIVSEFGSLTSQLKLKQCKTLVVGAGGLGCPSLMYLVGAGVGTIGIVDDDLVDETNLHRQVLHSTTSVGRLKCESAKSYLQELNPNVNIITYPVRLSNKNAFEIFADFDLVLDCTDSPASRYLINDVAVYFNIPVVSGSGLRTEGQLSVFNYENGPCYRCFYPDPPAANSVTSCSEGGVLGPVIGLLGTAMAVEAIKVITGFYHNTFKPFLTMYSAYPQQTFRVFKMRGKQKTCLCNHITRQAIESIDYSEFCGTLGPVNLLSHDQRISVHDYNSVRNSDHVLLDVRPKEQFEVSSFPGAVNIPWDSVLSKTTNIDKIDQLQLPPKSPIYVVCRYGNDSQLATKKLLDMGWNNVKDIKGGVSRWYSEVDQNIPFY</sequence>
<keyword id="KW-0067">ATP-binding</keyword>
<keyword id="KW-0963">Cytoplasm</keyword>
<keyword id="KW-0479">Metal-binding</keyword>
<keyword id="KW-0511">Multifunctional enzyme</keyword>
<keyword id="KW-0547">Nucleotide-binding</keyword>
<keyword id="KW-0548">Nucleotidyltransferase</keyword>
<keyword id="KW-1185">Reference proteome</keyword>
<keyword id="KW-0808">Transferase</keyword>
<keyword id="KW-0819">tRNA processing</keyword>
<keyword id="KW-0833">Ubl conjugation pathway</keyword>
<keyword id="KW-0862">Zinc</keyword>
<dbReference type="EC" id="2.7.7.-" evidence="2"/>
<dbReference type="EC" id="2.8.1.-" evidence="2"/>
<dbReference type="EMBL" id="CH408159">
    <property type="protein sequence ID" value="EDK40319.1"/>
    <property type="molecule type" value="Genomic_DNA"/>
</dbReference>
<dbReference type="RefSeq" id="XP_001483688.1">
    <property type="nucleotide sequence ID" value="XM_001483638.1"/>
</dbReference>
<dbReference type="SMR" id="A5DMB6"/>
<dbReference type="FunCoup" id="A5DMB6">
    <property type="interactions" value="845"/>
</dbReference>
<dbReference type="STRING" id="294746.A5DMB6"/>
<dbReference type="GeneID" id="5125466"/>
<dbReference type="KEGG" id="pgu:PGUG_04417"/>
<dbReference type="VEuPathDB" id="FungiDB:PGUG_04417"/>
<dbReference type="eggNOG" id="KOG2017">
    <property type="taxonomic scope" value="Eukaryota"/>
</dbReference>
<dbReference type="HOGENOM" id="CLU_013325_1_2_1"/>
<dbReference type="InParanoid" id="A5DMB6"/>
<dbReference type="OMA" id="IPDVGMD"/>
<dbReference type="OrthoDB" id="10261062at2759"/>
<dbReference type="UniPathway" id="UPA00988"/>
<dbReference type="Proteomes" id="UP000001997">
    <property type="component" value="Unassembled WGS sequence"/>
</dbReference>
<dbReference type="GO" id="GO:0005829">
    <property type="term" value="C:cytosol"/>
    <property type="evidence" value="ECO:0007669"/>
    <property type="project" value="InterPro"/>
</dbReference>
<dbReference type="GO" id="GO:0070566">
    <property type="term" value="F:adenylyltransferase activity"/>
    <property type="evidence" value="ECO:0007669"/>
    <property type="project" value="InterPro"/>
</dbReference>
<dbReference type="GO" id="GO:0005524">
    <property type="term" value="F:ATP binding"/>
    <property type="evidence" value="ECO:0007669"/>
    <property type="project" value="UniProtKB-KW"/>
</dbReference>
<dbReference type="GO" id="GO:0046872">
    <property type="term" value="F:metal ion binding"/>
    <property type="evidence" value="ECO:0007669"/>
    <property type="project" value="UniProtKB-KW"/>
</dbReference>
<dbReference type="GO" id="GO:0004792">
    <property type="term" value="F:thiosulfate-cyanide sulfurtransferase activity"/>
    <property type="evidence" value="ECO:0007669"/>
    <property type="project" value="TreeGrafter"/>
</dbReference>
<dbReference type="GO" id="GO:0042292">
    <property type="term" value="F:URM1 activating enzyme activity"/>
    <property type="evidence" value="ECO:0007669"/>
    <property type="project" value="TreeGrafter"/>
</dbReference>
<dbReference type="GO" id="GO:0032447">
    <property type="term" value="P:protein urmylation"/>
    <property type="evidence" value="ECO:0007669"/>
    <property type="project" value="UniProtKB-UniRule"/>
</dbReference>
<dbReference type="GO" id="GO:0002143">
    <property type="term" value="P:tRNA wobble position uridine thiolation"/>
    <property type="evidence" value="ECO:0007669"/>
    <property type="project" value="InterPro"/>
</dbReference>
<dbReference type="CDD" id="cd00757">
    <property type="entry name" value="ThiF_MoeB_HesA_family"/>
    <property type="match status" value="1"/>
</dbReference>
<dbReference type="FunFam" id="3.40.250.10:FF:000014">
    <property type="entry name" value="Adenylyltransferase and sulfurtransferase MOCS3"/>
    <property type="match status" value="1"/>
</dbReference>
<dbReference type="FunFam" id="3.40.50.720:FF:000033">
    <property type="entry name" value="Adenylyltransferase and sulfurtransferase MOCS3"/>
    <property type="match status" value="1"/>
</dbReference>
<dbReference type="Gene3D" id="3.40.50.720">
    <property type="entry name" value="NAD(P)-binding Rossmann-like Domain"/>
    <property type="match status" value="1"/>
</dbReference>
<dbReference type="Gene3D" id="3.40.250.10">
    <property type="entry name" value="Rhodanese-like domain"/>
    <property type="match status" value="1"/>
</dbReference>
<dbReference type="HAMAP" id="MF_03049">
    <property type="entry name" value="MOCS3_Uba4"/>
    <property type="match status" value="1"/>
</dbReference>
<dbReference type="InterPro" id="IPR028885">
    <property type="entry name" value="MOCS3/Uba4"/>
</dbReference>
<dbReference type="InterPro" id="IPR001763">
    <property type="entry name" value="Rhodanese-like_dom"/>
</dbReference>
<dbReference type="InterPro" id="IPR036873">
    <property type="entry name" value="Rhodanese-like_dom_sf"/>
</dbReference>
<dbReference type="InterPro" id="IPR045886">
    <property type="entry name" value="ThiF/MoeB/HesA"/>
</dbReference>
<dbReference type="InterPro" id="IPR000594">
    <property type="entry name" value="ThiF_NAD_FAD-bd"/>
</dbReference>
<dbReference type="InterPro" id="IPR035985">
    <property type="entry name" value="Ubiquitin-activating_enz"/>
</dbReference>
<dbReference type="PANTHER" id="PTHR10953:SF102">
    <property type="entry name" value="ADENYLYLTRANSFERASE AND SULFURTRANSFERASE MOCS3"/>
    <property type="match status" value="1"/>
</dbReference>
<dbReference type="PANTHER" id="PTHR10953">
    <property type="entry name" value="UBIQUITIN-ACTIVATING ENZYME E1"/>
    <property type="match status" value="1"/>
</dbReference>
<dbReference type="Pfam" id="PF00581">
    <property type="entry name" value="Rhodanese"/>
    <property type="match status" value="1"/>
</dbReference>
<dbReference type="Pfam" id="PF00899">
    <property type="entry name" value="ThiF"/>
    <property type="match status" value="1"/>
</dbReference>
<dbReference type="SMART" id="SM00450">
    <property type="entry name" value="RHOD"/>
    <property type="match status" value="1"/>
</dbReference>
<dbReference type="SUPFAM" id="SSF69572">
    <property type="entry name" value="Activating enzymes of the ubiquitin-like proteins"/>
    <property type="match status" value="1"/>
</dbReference>
<dbReference type="PROSITE" id="PS50206">
    <property type="entry name" value="RHODANESE_3"/>
    <property type="match status" value="1"/>
</dbReference>
<feature type="chain" id="PRO_0000369231" description="Adenylyltransferase and sulfurtransferase UBA4">
    <location>
        <begin position="1"/>
        <end position="424"/>
    </location>
</feature>
<feature type="domain" description="Rhodanese" evidence="2">
    <location>
        <begin position="326"/>
        <end position="422"/>
    </location>
</feature>
<feature type="active site" description="Glycyl thioester intermediate; for adenylyltransferase activity" evidence="2">
    <location>
        <position position="223"/>
    </location>
</feature>
<feature type="active site" description="Cysteine persulfide intermediate; for sulfurtransferase activity" evidence="2">
    <location>
        <position position="382"/>
    </location>
</feature>
<feature type="binding site" evidence="2">
    <location>
        <position position="76"/>
    </location>
    <ligand>
        <name>ATP</name>
        <dbReference type="ChEBI" id="CHEBI:30616"/>
    </ligand>
</feature>
<feature type="binding site" evidence="2">
    <location>
        <position position="97"/>
    </location>
    <ligand>
        <name>ATP</name>
        <dbReference type="ChEBI" id="CHEBI:30616"/>
    </ligand>
</feature>
<feature type="binding site" evidence="2">
    <location>
        <begin position="104"/>
        <end position="108"/>
    </location>
    <ligand>
        <name>ATP</name>
        <dbReference type="ChEBI" id="CHEBI:30616"/>
    </ligand>
</feature>
<feature type="binding site" evidence="2">
    <location>
        <position position="121"/>
    </location>
    <ligand>
        <name>ATP</name>
        <dbReference type="ChEBI" id="CHEBI:30616"/>
    </ligand>
</feature>
<feature type="binding site" evidence="2">
    <location>
        <begin position="165"/>
        <end position="166"/>
    </location>
    <ligand>
        <name>ATP</name>
        <dbReference type="ChEBI" id="CHEBI:30616"/>
    </ligand>
</feature>
<feature type="binding site" evidence="2">
    <location>
        <position position="206"/>
    </location>
    <ligand>
        <name>Zn(2+)</name>
        <dbReference type="ChEBI" id="CHEBI:29105"/>
    </ligand>
</feature>
<feature type="binding site" evidence="2">
    <location>
        <position position="209"/>
    </location>
    <ligand>
        <name>Zn(2+)</name>
        <dbReference type="ChEBI" id="CHEBI:29105"/>
    </ligand>
</feature>
<feature type="binding site" evidence="2">
    <location>
        <position position="283"/>
    </location>
    <ligand>
        <name>Zn(2+)</name>
        <dbReference type="ChEBI" id="CHEBI:29105"/>
    </ligand>
</feature>
<organism>
    <name type="scientific">Meyerozyma guilliermondii (strain ATCC 6260 / CBS 566 / DSM 6381 / JCM 1539 / NBRC 10279 / NRRL Y-324)</name>
    <name type="common">Yeast</name>
    <name type="synonym">Candida guilliermondii</name>
    <dbReference type="NCBI Taxonomy" id="294746"/>
    <lineage>
        <taxon>Eukaryota</taxon>
        <taxon>Fungi</taxon>
        <taxon>Dikarya</taxon>
        <taxon>Ascomycota</taxon>
        <taxon>Saccharomycotina</taxon>
        <taxon>Pichiomycetes</taxon>
        <taxon>Debaryomycetaceae</taxon>
        <taxon>Meyerozyma</taxon>
    </lineage>
</organism>
<reference key="1">
    <citation type="journal article" date="2009" name="Nature">
        <title>Evolution of pathogenicity and sexual reproduction in eight Candida genomes.</title>
        <authorList>
            <person name="Butler G."/>
            <person name="Rasmussen M.D."/>
            <person name="Lin M.F."/>
            <person name="Santos M.A.S."/>
            <person name="Sakthikumar S."/>
            <person name="Munro C.A."/>
            <person name="Rheinbay E."/>
            <person name="Grabherr M."/>
            <person name="Forche A."/>
            <person name="Reedy J.L."/>
            <person name="Agrafioti I."/>
            <person name="Arnaud M.B."/>
            <person name="Bates S."/>
            <person name="Brown A.J.P."/>
            <person name="Brunke S."/>
            <person name="Costanzo M.C."/>
            <person name="Fitzpatrick D.A."/>
            <person name="de Groot P.W.J."/>
            <person name="Harris D."/>
            <person name="Hoyer L.L."/>
            <person name="Hube B."/>
            <person name="Klis F.M."/>
            <person name="Kodira C."/>
            <person name="Lennard N."/>
            <person name="Logue M.E."/>
            <person name="Martin R."/>
            <person name="Neiman A.M."/>
            <person name="Nikolaou E."/>
            <person name="Quail M.A."/>
            <person name="Quinn J."/>
            <person name="Santos M.C."/>
            <person name="Schmitzberger F.F."/>
            <person name="Sherlock G."/>
            <person name="Shah P."/>
            <person name="Silverstein K.A.T."/>
            <person name="Skrzypek M.S."/>
            <person name="Soll D."/>
            <person name="Staggs R."/>
            <person name="Stansfield I."/>
            <person name="Stumpf M.P.H."/>
            <person name="Sudbery P.E."/>
            <person name="Srikantha T."/>
            <person name="Zeng Q."/>
            <person name="Berman J."/>
            <person name="Berriman M."/>
            <person name="Heitman J."/>
            <person name="Gow N.A.R."/>
            <person name="Lorenz M.C."/>
            <person name="Birren B.W."/>
            <person name="Kellis M."/>
            <person name="Cuomo C.A."/>
        </authorList>
    </citation>
    <scope>NUCLEOTIDE SEQUENCE [LARGE SCALE GENOMIC DNA]</scope>
    <source>
        <strain>ATCC 6260 / CBS 566 / DSM 6381 / JCM 1539 / NBRC 10279 / NRRL Y-324</strain>
    </source>
</reference>
<comment type="function">
    <text evidence="2">Plays a central role in 2-thiolation of mcm(5)S(2)U at tRNA wobble positions of cytosolic tRNA(Lys), tRNA(Glu) and tRNA(Gln). Acts by mediating the C-terminal thiocarboxylation of sulfur carrier URM1. Its N-terminus first activates URM1 as acyl-adenylate (-COAMP), then the persulfide sulfur on the catalytic cysteine is transferred to URM1 to form thiocarboxylation (-COSH) of its C-terminus. The reaction probably involves hydrogen sulfide that is generated from the persulfide intermediate and that acts as a nucleophile towards URM1. Subsequently, a transient disulfide bond is formed. Does not use thiosulfate as sulfur donor; NFS1 probably acting as a sulfur donor for thiocarboxylation reactions. Prior mcm(5) tRNA modification by the elongator complex is required for 2-thiolation. May also be involved in protein urmylation.</text>
</comment>
<comment type="cofactor">
    <cofactor evidence="2">
        <name>Zn(2+)</name>
        <dbReference type="ChEBI" id="CHEBI:29105"/>
    </cofactor>
    <text evidence="2">Binds 1 zinc ion per subunit.</text>
</comment>
<comment type="pathway">
    <text evidence="2">tRNA modification; 5-methoxycarbonylmethyl-2-thiouridine-tRNA biosynthesis.</text>
</comment>
<comment type="subcellular location">
    <subcellularLocation>
        <location evidence="1">Cytoplasm</location>
        <location evidence="1">Cytosol</location>
    </subcellularLocation>
</comment>
<comment type="similarity">
    <text evidence="2">In the N-terminal section; belongs to the HesA/MoeB/ThiF family. UBA4 subfamily.</text>
</comment>
<proteinExistence type="inferred from homology"/>
<gene>
    <name evidence="2" type="primary">UBA4</name>
    <name type="ORF">PGUG_04417</name>
</gene>
<name>UBA4_PICGU</name>
<evidence type="ECO:0000250" key="1">
    <source>
        <dbReference type="UniProtKB" id="P38820"/>
    </source>
</evidence>
<evidence type="ECO:0000255" key="2">
    <source>
        <dbReference type="HAMAP-Rule" id="MF_03049"/>
    </source>
</evidence>
<protein>
    <recommendedName>
        <fullName evidence="2">Adenylyltransferase and sulfurtransferase UBA4</fullName>
    </recommendedName>
    <alternativeName>
        <fullName evidence="2">Ubiquitin-like protein activator 4</fullName>
    </alternativeName>
    <domain>
        <recommendedName>
            <fullName evidence="2">Adenylyltransferase UBA4</fullName>
            <ecNumber evidence="2">2.7.7.-</ecNumber>
        </recommendedName>
    </domain>
    <domain>
        <recommendedName>
            <fullName evidence="2">Sulfurtransferase UBA4</fullName>
            <ecNumber evidence="2">2.8.1.-</ecNumber>
        </recommendedName>
    </domain>
</protein>
<accession>A5DMB6</accession>